<accession>Q6C6M0</accession>
<name>ATG2_YARLI</name>
<dbReference type="EMBL" id="CR382131">
    <property type="protein sequence ID" value="CAG79281.2"/>
    <property type="molecule type" value="Genomic_DNA"/>
</dbReference>
<dbReference type="RefSeq" id="XP_503692.2">
    <property type="nucleotide sequence ID" value="XM_503692.2"/>
</dbReference>
<dbReference type="FunCoup" id="Q6C6M0">
    <property type="interactions" value="49"/>
</dbReference>
<dbReference type="STRING" id="284591.Q6C6M0"/>
<dbReference type="EnsemblFungi" id="CAG79281">
    <property type="protein sequence ID" value="CAG79281"/>
    <property type="gene ID" value="YALI0_E08338g"/>
</dbReference>
<dbReference type="KEGG" id="yli:2912485"/>
<dbReference type="VEuPathDB" id="FungiDB:YALI0_E08338g"/>
<dbReference type="HOGENOM" id="CLU_000626_3_0_1"/>
<dbReference type="InParanoid" id="Q6C6M0"/>
<dbReference type="OrthoDB" id="86944at4891"/>
<dbReference type="Proteomes" id="UP000001300">
    <property type="component" value="Chromosome E"/>
</dbReference>
<dbReference type="GO" id="GO:0005789">
    <property type="term" value="C:endoplasmic reticulum membrane"/>
    <property type="evidence" value="ECO:0007669"/>
    <property type="project" value="UniProtKB-SubCell"/>
</dbReference>
<dbReference type="GO" id="GO:0061908">
    <property type="term" value="C:phagophore"/>
    <property type="evidence" value="ECO:0000318"/>
    <property type="project" value="GO_Central"/>
</dbReference>
<dbReference type="GO" id="GO:0000407">
    <property type="term" value="C:phagophore assembly site"/>
    <property type="evidence" value="ECO:0000318"/>
    <property type="project" value="GO_Central"/>
</dbReference>
<dbReference type="GO" id="GO:0034045">
    <property type="term" value="C:phagophore assembly site membrane"/>
    <property type="evidence" value="ECO:0007669"/>
    <property type="project" value="UniProtKB-SubCell"/>
</dbReference>
<dbReference type="GO" id="GO:0032266">
    <property type="term" value="F:phosphatidylinositol-3-phosphate binding"/>
    <property type="evidence" value="ECO:0000318"/>
    <property type="project" value="GO_Central"/>
</dbReference>
<dbReference type="GO" id="GO:0043495">
    <property type="term" value="F:protein-membrane adaptor activity"/>
    <property type="evidence" value="ECO:0000318"/>
    <property type="project" value="GO_Central"/>
</dbReference>
<dbReference type="GO" id="GO:0000045">
    <property type="term" value="P:autophagosome assembly"/>
    <property type="evidence" value="ECO:0000318"/>
    <property type="project" value="GO_Central"/>
</dbReference>
<dbReference type="GO" id="GO:0000422">
    <property type="term" value="P:autophagy of mitochondrion"/>
    <property type="evidence" value="ECO:0000318"/>
    <property type="project" value="GO_Central"/>
</dbReference>
<dbReference type="GO" id="GO:0061723">
    <property type="term" value="P:glycophagy"/>
    <property type="evidence" value="ECO:0000318"/>
    <property type="project" value="GO_Central"/>
</dbReference>
<dbReference type="GO" id="GO:0006869">
    <property type="term" value="P:lipid transport"/>
    <property type="evidence" value="ECO:0007669"/>
    <property type="project" value="UniProtKB-KW"/>
</dbReference>
<dbReference type="GO" id="GO:0000425">
    <property type="term" value="P:pexophagy"/>
    <property type="evidence" value="ECO:0000318"/>
    <property type="project" value="GO_Central"/>
</dbReference>
<dbReference type="GO" id="GO:0034727">
    <property type="term" value="P:piecemeal microautophagy of the nucleus"/>
    <property type="evidence" value="ECO:0000318"/>
    <property type="project" value="GO_Central"/>
</dbReference>
<dbReference type="GO" id="GO:0015031">
    <property type="term" value="P:protein transport"/>
    <property type="evidence" value="ECO:0007669"/>
    <property type="project" value="UniProtKB-KW"/>
</dbReference>
<dbReference type="GO" id="GO:0061709">
    <property type="term" value="P:reticulophagy"/>
    <property type="evidence" value="ECO:0000318"/>
    <property type="project" value="GO_Central"/>
</dbReference>
<dbReference type="InterPro" id="IPR026849">
    <property type="entry name" value="ATG2"/>
</dbReference>
<dbReference type="PANTHER" id="PTHR13190">
    <property type="entry name" value="AUTOPHAGY-RELATED 2, ISOFORM A"/>
    <property type="match status" value="1"/>
</dbReference>
<dbReference type="PANTHER" id="PTHR13190:SF1">
    <property type="entry name" value="AUTOPHAGY-RELATED 2, ISOFORM A"/>
    <property type="match status" value="1"/>
</dbReference>
<dbReference type="Pfam" id="PF13329">
    <property type="entry name" value="ATG2_CAD"/>
    <property type="match status" value="2"/>
</dbReference>
<protein>
    <recommendedName>
        <fullName>Autophagy-related protein 2</fullName>
    </recommendedName>
</protein>
<proteinExistence type="inferred from homology"/>
<gene>
    <name type="primary">ATG2</name>
    <name type="ordered locus">YALI0E08338g</name>
</gene>
<reference key="1">
    <citation type="journal article" date="2004" name="Nature">
        <title>Genome evolution in yeasts.</title>
        <authorList>
            <person name="Dujon B."/>
            <person name="Sherman D."/>
            <person name="Fischer G."/>
            <person name="Durrens P."/>
            <person name="Casaregola S."/>
            <person name="Lafontaine I."/>
            <person name="de Montigny J."/>
            <person name="Marck C."/>
            <person name="Neuveglise C."/>
            <person name="Talla E."/>
            <person name="Goffard N."/>
            <person name="Frangeul L."/>
            <person name="Aigle M."/>
            <person name="Anthouard V."/>
            <person name="Babour A."/>
            <person name="Barbe V."/>
            <person name="Barnay S."/>
            <person name="Blanchin S."/>
            <person name="Beckerich J.-M."/>
            <person name="Beyne E."/>
            <person name="Bleykasten C."/>
            <person name="Boisrame A."/>
            <person name="Boyer J."/>
            <person name="Cattolico L."/>
            <person name="Confanioleri F."/>
            <person name="de Daruvar A."/>
            <person name="Despons L."/>
            <person name="Fabre E."/>
            <person name="Fairhead C."/>
            <person name="Ferry-Dumazet H."/>
            <person name="Groppi A."/>
            <person name="Hantraye F."/>
            <person name="Hennequin C."/>
            <person name="Jauniaux N."/>
            <person name="Joyet P."/>
            <person name="Kachouri R."/>
            <person name="Kerrest A."/>
            <person name="Koszul R."/>
            <person name="Lemaire M."/>
            <person name="Lesur I."/>
            <person name="Ma L."/>
            <person name="Muller H."/>
            <person name="Nicaud J.-M."/>
            <person name="Nikolski M."/>
            <person name="Oztas S."/>
            <person name="Ozier-Kalogeropoulos O."/>
            <person name="Pellenz S."/>
            <person name="Potier S."/>
            <person name="Richard G.-F."/>
            <person name="Straub M.-L."/>
            <person name="Suleau A."/>
            <person name="Swennen D."/>
            <person name="Tekaia F."/>
            <person name="Wesolowski-Louvel M."/>
            <person name="Westhof E."/>
            <person name="Wirth B."/>
            <person name="Zeniou-Meyer M."/>
            <person name="Zivanovic Y."/>
            <person name="Bolotin-Fukuhara M."/>
            <person name="Thierry A."/>
            <person name="Bouchier C."/>
            <person name="Caudron B."/>
            <person name="Scarpelli C."/>
            <person name="Gaillardin C."/>
            <person name="Weissenbach J."/>
            <person name="Wincker P."/>
            <person name="Souciet J.-L."/>
        </authorList>
    </citation>
    <scope>NUCLEOTIDE SEQUENCE [LARGE SCALE GENOMIC DNA]</scope>
    <source>
        <strain>CLIB 122 / E 150</strain>
    </source>
</reference>
<feature type="chain" id="PRO_0000215835" description="Autophagy-related protein 2">
    <location>
        <begin position="1"/>
        <end position="1525"/>
    </location>
</feature>
<feature type="region of interest" description="Disordered" evidence="3">
    <location>
        <begin position="216"/>
        <end position="247"/>
    </location>
</feature>
<feature type="region of interest" description="Disordered" evidence="3">
    <location>
        <begin position="712"/>
        <end position="738"/>
    </location>
</feature>
<feature type="compositionally biased region" description="Polar residues" evidence="3">
    <location>
        <begin position="220"/>
        <end position="230"/>
    </location>
</feature>
<feature type="compositionally biased region" description="Low complexity" evidence="3">
    <location>
        <begin position="716"/>
        <end position="733"/>
    </location>
</feature>
<keyword id="KW-0072">Autophagy</keyword>
<keyword id="KW-0256">Endoplasmic reticulum</keyword>
<keyword id="KW-0445">Lipid transport</keyword>
<keyword id="KW-0472">Membrane</keyword>
<keyword id="KW-0653">Protein transport</keyword>
<keyword id="KW-1185">Reference proteome</keyword>
<keyword id="KW-0813">Transport</keyword>
<organism>
    <name type="scientific">Yarrowia lipolytica (strain CLIB 122 / E 150)</name>
    <name type="common">Yeast</name>
    <name type="synonym">Candida lipolytica</name>
    <dbReference type="NCBI Taxonomy" id="284591"/>
    <lineage>
        <taxon>Eukaryota</taxon>
        <taxon>Fungi</taxon>
        <taxon>Dikarya</taxon>
        <taxon>Ascomycota</taxon>
        <taxon>Saccharomycotina</taxon>
        <taxon>Dipodascomycetes</taxon>
        <taxon>Dipodascales</taxon>
        <taxon>Dipodascales incertae sedis</taxon>
        <taxon>Yarrowia</taxon>
    </lineage>
</organism>
<comment type="function">
    <text evidence="2">Lipid transfer protein required for autophagosome completion and peroxisome degradation. Tethers the edge of the isolation membrane (IM) to the endoplasmic reticulum (ER) and mediates direct lipid transfer from ER to IM for IM expansion. ATG2 binds to the ER exit site (ERES), which is the membrane source for autophagosome formation, using basic residues in its N-terminal region (NR) and to the expanding edge of the IM through its C-terminal region. The latter binding is assisted by an ATG18-PtdIns3P interaction. ATG2 then extracts phospholipids from the membrane source using its NR and transfers them to ATG9 to the IM through its predicted beta-sheet-rich structure for membrane expansion.</text>
</comment>
<comment type="catalytic activity">
    <reaction evidence="1">
        <text>a 1,2-diacyl-sn-glycero-3-phosphocholine(in) = a 1,2-diacyl-sn-glycero-3-phosphocholine(out)</text>
        <dbReference type="Rhea" id="RHEA:38571"/>
        <dbReference type="ChEBI" id="CHEBI:57643"/>
    </reaction>
</comment>
<comment type="catalytic activity">
    <reaction evidence="1">
        <text>a 1,2-diacyl-sn-glycero-3-phospho-L-serine(in) = a 1,2-diacyl-sn-glycero-3-phospho-L-serine(out)</text>
        <dbReference type="Rhea" id="RHEA:38663"/>
        <dbReference type="ChEBI" id="CHEBI:57262"/>
    </reaction>
</comment>
<comment type="catalytic activity">
    <reaction evidence="1">
        <text>a 1,2-diacyl-sn-glycero-3-phosphoethanolamine(in) = a 1,2-diacyl-sn-glycero-3-phosphoethanolamine(out)</text>
        <dbReference type="Rhea" id="RHEA:38895"/>
        <dbReference type="ChEBI" id="CHEBI:64612"/>
    </reaction>
</comment>
<comment type="subcellular location">
    <subcellularLocation>
        <location evidence="2">Preautophagosomal structure membrane</location>
        <topology evidence="2">Peripheral membrane protein</topology>
    </subcellularLocation>
    <subcellularLocation>
        <location evidence="2">Endoplasmic reticulum membrane</location>
        <topology evidence="2">Peripheral membrane protein</topology>
    </subcellularLocation>
</comment>
<comment type="similarity">
    <text evidence="4">Belongs to the ATG2 family.</text>
</comment>
<sequence length="1525" mass="166370">MNWIPNVQKRAFHYVLNRLALFSDLELDNMDISLGTAQKAALTNVKLDPDRVSLPAGMYMRSGKIDEVSVEMRLLGGAGIAVKIDGVHITASMKQMDVETATEHVEEFLERTTADLAASILSEDLSASLQIDPAEEPPLLGMGGSGISEALVKKVTQTVLSQLTVDVTNVHVTLFVAADDKMDLVVDEVRLRPQGGQEMALEVRGVKMKVMDKKARGTSAPVTAGSTAHATTGFTSESDSDSDTDPFSNAKKSLLQSTIFSHEEASSIYMSAIAESANLGFESDPLFGVFYVDTIDVLVFLGEEMRVSCEVGIVRASLDLLPTVILSLVKVGNGGSGGKKSRDSETKEGTAMDLNMSIKSISASICQLGDDWEFKNIDTNLLFSLSDISGSSGAFHKLQIGVCEVKRGSTRVFGFESDEKNTDDEEPTPRDSDILLKASSASFTLVLPKKAVGVFTIPDLIDVVSLITYLLSLIESKQQKAATMTERSERAGASKTTVQTNTFDFDVAGHKLYILPIRLSNGQMSLSRVSFGDVHVKGISFENSIVSVDKVDFDIGLPIVEELHQLLLPIIDAMNSAKNRPVPASVQTAPPKLLRIVEEPVNASSLVINVARVKGKVDLGGKVGVIEVVLGGISVTGPTDRIEISTVEIGRDLSDLGLSKKWLLHPLKRESNVVVELSSGQIQLITVKNCALEFYTELLELFGGKGDDTKAAELQESSSPDSSSRESSSGSESPPKRIPLQIHNCAVGLNPTNSSSSAQFIVKHVTCEIKPSPTFSMTSFIGSASLLLIDDASLVTPNPTDLMSSYLEQYTSVASLTATSISISTSPGNPTCININGDTVTLSTCADSTQTLIHLINSLKPAVELSGAKFQLETLDPFLNTFQDVDDCFFKAKNKDACESSCSSDNDDIDMVSDDVPNNMSFVESYYGGDKPSQSRKSGRQKMAESYTHADFLLDSDLDSLVKRERVRFEEICFEEDYFDKEEEDMPVMSRPRASSHDLASSNELLTPPTVVINIDLIHNIVCNFHDGYDWQYTRNEINGAVDGLKKRMKERPVVEEPPVMTTDLLFNSIYIQAKDEDDLDDVVGEQTEPAKPKEANKSRRGLLSRSSNPLVQVWLQGIACLLTVYAGLEDPDLPPGQVLNSLDVKIKDVEIIDHVPTSTWNKFLTYMRSRGEREAGAVMAHITMQNVKPVSTLSSQEVICHVTILPLRLHVDQDTLDFLTRFFNFKDVRTTAPPDETFIQKFDIRDVPVKLDYKPKKVDYSGLKSGKSTELMNFFILDESDMVLRRIKLRGITGFANLGQKLNDIWMPDVRRTQLPGVLAGVAPVRPLVNLGGGIRNLIVVPVREYKKDGRVVRSLNQGAYAFAKTTTNELVRFGAKLAVGTQNLLEGVVSTERAGESRDLDDSDLESTTKYYTYMGYSDSNNKLISLYANQPLGVYAGLQDAYSSFGKHMNVAKTAIHNLSEDISEADTAGAAAYAVVKAAPVALIRPIIGTTEAVSKTLFGVANEMDPSGRELARDKYKEAN</sequence>
<evidence type="ECO:0000250" key="1">
    <source>
        <dbReference type="UniProtKB" id="O94649"/>
    </source>
</evidence>
<evidence type="ECO:0000250" key="2">
    <source>
        <dbReference type="UniProtKB" id="P53855"/>
    </source>
</evidence>
<evidence type="ECO:0000256" key="3">
    <source>
        <dbReference type="SAM" id="MobiDB-lite"/>
    </source>
</evidence>
<evidence type="ECO:0000305" key="4"/>